<accession>Q0HVY0</accession>
<dbReference type="EC" id="2.7.1.48" evidence="1"/>
<dbReference type="EMBL" id="CP000444">
    <property type="protein sequence ID" value="ABI42725.1"/>
    <property type="molecule type" value="Genomic_DNA"/>
</dbReference>
<dbReference type="SMR" id="Q0HVY0"/>
<dbReference type="KEGG" id="shm:Shewmr7_1732"/>
<dbReference type="HOGENOM" id="CLU_021278_1_2_6"/>
<dbReference type="UniPathway" id="UPA00574">
    <property type="reaction ID" value="UER00637"/>
</dbReference>
<dbReference type="UniPathway" id="UPA00579">
    <property type="reaction ID" value="UER00640"/>
</dbReference>
<dbReference type="GO" id="GO:0005737">
    <property type="term" value="C:cytoplasm"/>
    <property type="evidence" value="ECO:0007669"/>
    <property type="project" value="UniProtKB-SubCell"/>
</dbReference>
<dbReference type="GO" id="GO:0005524">
    <property type="term" value="F:ATP binding"/>
    <property type="evidence" value="ECO:0007669"/>
    <property type="project" value="UniProtKB-UniRule"/>
</dbReference>
<dbReference type="GO" id="GO:0043771">
    <property type="term" value="F:cytidine kinase activity"/>
    <property type="evidence" value="ECO:0007669"/>
    <property type="project" value="RHEA"/>
</dbReference>
<dbReference type="GO" id="GO:0004849">
    <property type="term" value="F:uridine kinase activity"/>
    <property type="evidence" value="ECO:0007669"/>
    <property type="project" value="UniProtKB-UniRule"/>
</dbReference>
<dbReference type="GO" id="GO:0044211">
    <property type="term" value="P:CTP salvage"/>
    <property type="evidence" value="ECO:0007669"/>
    <property type="project" value="UniProtKB-UniRule"/>
</dbReference>
<dbReference type="GO" id="GO:0044206">
    <property type="term" value="P:UMP salvage"/>
    <property type="evidence" value="ECO:0007669"/>
    <property type="project" value="UniProtKB-UniRule"/>
</dbReference>
<dbReference type="CDD" id="cd02023">
    <property type="entry name" value="UMPK"/>
    <property type="match status" value="1"/>
</dbReference>
<dbReference type="Gene3D" id="3.40.50.300">
    <property type="entry name" value="P-loop containing nucleotide triphosphate hydrolases"/>
    <property type="match status" value="1"/>
</dbReference>
<dbReference type="HAMAP" id="MF_00551">
    <property type="entry name" value="Uridine_kinase"/>
    <property type="match status" value="1"/>
</dbReference>
<dbReference type="InterPro" id="IPR027417">
    <property type="entry name" value="P-loop_NTPase"/>
</dbReference>
<dbReference type="InterPro" id="IPR006083">
    <property type="entry name" value="PRK/URK"/>
</dbReference>
<dbReference type="InterPro" id="IPR026008">
    <property type="entry name" value="Uridine_kinase"/>
</dbReference>
<dbReference type="InterPro" id="IPR000764">
    <property type="entry name" value="Uridine_kinase-like"/>
</dbReference>
<dbReference type="NCBIfam" id="NF004018">
    <property type="entry name" value="PRK05480.1"/>
    <property type="match status" value="1"/>
</dbReference>
<dbReference type="NCBIfam" id="TIGR00235">
    <property type="entry name" value="udk"/>
    <property type="match status" value="1"/>
</dbReference>
<dbReference type="PANTHER" id="PTHR10285">
    <property type="entry name" value="URIDINE KINASE"/>
    <property type="match status" value="1"/>
</dbReference>
<dbReference type="Pfam" id="PF00485">
    <property type="entry name" value="PRK"/>
    <property type="match status" value="1"/>
</dbReference>
<dbReference type="PRINTS" id="PR00988">
    <property type="entry name" value="URIDINKINASE"/>
</dbReference>
<dbReference type="SUPFAM" id="SSF52540">
    <property type="entry name" value="P-loop containing nucleoside triphosphate hydrolases"/>
    <property type="match status" value="1"/>
</dbReference>
<reference key="1">
    <citation type="submission" date="2006-08" db="EMBL/GenBank/DDBJ databases">
        <title>Complete sequence of chromosome 1 of Shewanella sp. MR-7.</title>
        <authorList>
            <person name="Copeland A."/>
            <person name="Lucas S."/>
            <person name="Lapidus A."/>
            <person name="Barry K."/>
            <person name="Detter J.C."/>
            <person name="Glavina del Rio T."/>
            <person name="Hammon N."/>
            <person name="Israni S."/>
            <person name="Dalin E."/>
            <person name="Tice H."/>
            <person name="Pitluck S."/>
            <person name="Kiss H."/>
            <person name="Brettin T."/>
            <person name="Bruce D."/>
            <person name="Han C."/>
            <person name="Tapia R."/>
            <person name="Gilna P."/>
            <person name="Schmutz J."/>
            <person name="Larimer F."/>
            <person name="Land M."/>
            <person name="Hauser L."/>
            <person name="Kyrpides N."/>
            <person name="Mikhailova N."/>
            <person name="Nealson K."/>
            <person name="Konstantinidis K."/>
            <person name="Klappenbach J."/>
            <person name="Tiedje J."/>
            <person name="Richardson P."/>
        </authorList>
    </citation>
    <scope>NUCLEOTIDE SEQUENCE [LARGE SCALE GENOMIC DNA]</scope>
    <source>
        <strain>MR-7</strain>
    </source>
</reference>
<comment type="catalytic activity">
    <reaction evidence="1">
        <text>uridine + ATP = UMP + ADP + H(+)</text>
        <dbReference type="Rhea" id="RHEA:16825"/>
        <dbReference type="ChEBI" id="CHEBI:15378"/>
        <dbReference type="ChEBI" id="CHEBI:16704"/>
        <dbReference type="ChEBI" id="CHEBI:30616"/>
        <dbReference type="ChEBI" id="CHEBI:57865"/>
        <dbReference type="ChEBI" id="CHEBI:456216"/>
        <dbReference type="EC" id="2.7.1.48"/>
    </reaction>
</comment>
<comment type="catalytic activity">
    <reaction evidence="1">
        <text>cytidine + ATP = CMP + ADP + H(+)</text>
        <dbReference type="Rhea" id="RHEA:24674"/>
        <dbReference type="ChEBI" id="CHEBI:15378"/>
        <dbReference type="ChEBI" id="CHEBI:17562"/>
        <dbReference type="ChEBI" id="CHEBI:30616"/>
        <dbReference type="ChEBI" id="CHEBI:60377"/>
        <dbReference type="ChEBI" id="CHEBI:456216"/>
        <dbReference type="EC" id="2.7.1.48"/>
    </reaction>
</comment>
<comment type="pathway">
    <text evidence="1">Pyrimidine metabolism; CTP biosynthesis via salvage pathway; CTP from cytidine: step 1/3.</text>
</comment>
<comment type="pathway">
    <text evidence="1">Pyrimidine metabolism; UMP biosynthesis via salvage pathway; UMP from uridine: step 1/1.</text>
</comment>
<comment type="subcellular location">
    <subcellularLocation>
        <location evidence="1">Cytoplasm</location>
    </subcellularLocation>
</comment>
<comment type="similarity">
    <text evidence="1">Belongs to the uridine kinase family.</text>
</comment>
<sequence>MNSQQCVIIAIAGASASGKSLIAKTIFDELRRDLGTDQIGVINEDAYYRDQSHLSMDERVLTNYDHPKALDHQLLCTHLQLLKSGEAVDIPCYSYTEHTRMAETVKMTPKKVIILEGILLLTDPKLRELMDASVFMDTPLDICFLRRLTRDVAERGRTMESVISQYKKTVRPMFLQFIEPSKQYADIIVPRGGKNRIATDILKTRIQHLLAK</sequence>
<protein>
    <recommendedName>
        <fullName evidence="1">Uridine kinase</fullName>
        <ecNumber evidence="1">2.7.1.48</ecNumber>
    </recommendedName>
    <alternativeName>
        <fullName evidence="1">Cytidine monophosphokinase</fullName>
    </alternativeName>
    <alternativeName>
        <fullName evidence="1">Uridine monophosphokinase</fullName>
    </alternativeName>
</protein>
<proteinExistence type="inferred from homology"/>
<evidence type="ECO:0000255" key="1">
    <source>
        <dbReference type="HAMAP-Rule" id="MF_00551"/>
    </source>
</evidence>
<name>URK_SHESR</name>
<organism>
    <name type="scientific">Shewanella sp. (strain MR-7)</name>
    <dbReference type="NCBI Taxonomy" id="60481"/>
    <lineage>
        <taxon>Bacteria</taxon>
        <taxon>Pseudomonadati</taxon>
        <taxon>Pseudomonadota</taxon>
        <taxon>Gammaproteobacteria</taxon>
        <taxon>Alteromonadales</taxon>
        <taxon>Shewanellaceae</taxon>
        <taxon>Shewanella</taxon>
    </lineage>
</organism>
<feature type="chain" id="PRO_1000017898" description="Uridine kinase">
    <location>
        <begin position="1"/>
        <end position="212"/>
    </location>
</feature>
<feature type="binding site" evidence="1">
    <location>
        <begin position="13"/>
        <end position="20"/>
    </location>
    <ligand>
        <name>ATP</name>
        <dbReference type="ChEBI" id="CHEBI:30616"/>
    </ligand>
</feature>
<keyword id="KW-0067">ATP-binding</keyword>
<keyword id="KW-0963">Cytoplasm</keyword>
<keyword id="KW-0418">Kinase</keyword>
<keyword id="KW-0547">Nucleotide-binding</keyword>
<keyword id="KW-0808">Transferase</keyword>
<gene>
    <name evidence="1" type="primary">udk</name>
    <name type="ordered locus">Shewmr7_1732</name>
</gene>